<name>IDI2_BACCN</name>
<accession>A7GN36</accession>
<feature type="chain" id="PRO_1000079379" description="Isopentenyl-diphosphate delta-isomerase">
    <location>
        <begin position="1"/>
        <end position="349"/>
    </location>
</feature>
<feature type="binding site" evidence="1">
    <location>
        <begin position="6"/>
        <end position="7"/>
    </location>
    <ligand>
        <name>substrate</name>
    </ligand>
</feature>
<feature type="binding site" evidence="1">
    <location>
        <begin position="62"/>
        <end position="64"/>
    </location>
    <ligand>
        <name>FMN</name>
        <dbReference type="ChEBI" id="CHEBI:58210"/>
    </ligand>
</feature>
<feature type="binding site" evidence="1">
    <location>
        <position position="93"/>
    </location>
    <ligand>
        <name>FMN</name>
        <dbReference type="ChEBI" id="CHEBI:58210"/>
    </ligand>
</feature>
<feature type="binding site" evidence="1">
    <location>
        <position position="122"/>
    </location>
    <ligand>
        <name>FMN</name>
        <dbReference type="ChEBI" id="CHEBI:58210"/>
    </ligand>
</feature>
<feature type="binding site" evidence="1">
    <location>
        <position position="152"/>
    </location>
    <ligand>
        <name>substrate</name>
    </ligand>
</feature>
<feature type="binding site" evidence="1">
    <location>
        <position position="153"/>
    </location>
    <ligand>
        <name>Mg(2+)</name>
        <dbReference type="ChEBI" id="CHEBI:18420"/>
    </ligand>
</feature>
<feature type="binding site" evidence="1">
    <location>
        <position position="184"/>
    </location>
    <ligand>
        <name>FMN</name>
        <dbReference type="ChEBI" id="CHEBI:58210"/>
    </ligand>
</feature>
<feature type="binding site" evidence="1">
    <location>
        <position position="214"/>
    </location>
    <ligand>
        <name>FMN</name>
        <dbReference type="ChEBI" id="CHEBI:58210"/>
    </ligand>
</feature>
<feature type="binding site" evidence="1">
    <location>
        <begin position="258"/>
        <end position="259"/>
    </location>
    <ligand>
        <name>FMN</name>
        <dbReference type="ChEBI" id="CHEBI:58210"/>
    </ligand>
</feature>
<feature type="binding site" evidence="1">
    <location>
        <begin position="280"/>
        <end position="281"/>
    </location>
    <ligand>
        <name>FMN</name>
        <dbReference type="ChEBI" id="CHEBI:58210"/>
    </ligand>
</feature>
<dbReference type="EC" id="5.3.3.2" evidence="1"/>
<dbReference type="EMBL" id="CP000764">
    <property type="protein sequence ID" value="ABS21544.1"/>
    <property type="molecule type" value="Genomic_DNA"/>
</dbReference>
<dbReference type="RefSeq" id="WP_011984297.1">
    <property type="nucleotide sequence ID" value="NC_009674.1"/>
</dbReference>
<dbReference type="SMR" id="A7GN36"/>
<dbReference type="STRING" id="315749.Bcer98_1222"/>
<dbReference type="GeneID" id="33896572"/>
<dbReference type="KEGG" id="bcy:Bcer98_1222"/>
<dbReference type="eggNOG" id="COG1304">
    <property type="taxonomic scope" value="Bacteria"/>
</dbReference>
<dbReference type="HOGENOM" id="CLU_065515_0_0_9"/>
<dbReference type="OrthoDB" id="9795032at2"/>
<dbReference type="Proteomes" id="UP000002300">
    <property type="component" value="Chromosome"/>
</dbReference>
<dbReference type="GO" id="GO:0005737">
    <property type="term" value="C:cytoplasm"/>
    <property type="evidence" value="ECO:0007669"/>
    <property type="project" value="UniProtKB-SubCell"/>
</dbReference>
<dbReference type="GO" id="GO:0010181">
    <property type="term" value="F:FMN binding"/>
    <property type="evidence" value="ECO:0007669"/>
    <property type="project" value="UniProtKB-UniRule"/>
</dbReference>
<dbReference type="GO" id="GO:0004452">
    <property type="term" value="F:isopentenyl-diphosphate delta-isomerase activity"/>
    <property type="evidence" value="ECO:0007669"/>
    <property type="project" value="UniProtKB-UniRule"/>
</dbReference>
<dbReference type="GO" id="GO:0000287">
    <property type="term" value="F:magnesium ion binding"/>
    <property type="evidence" value="ECO:0007669"/>
    <property type="project" value="UniProtKB-UniRule"/>
</dbReference>
<dbReference type="GO" id="GO:0070402">
    <property type="term" value="F:NADPH binding"/>
    <property type="evidence" value="ECO:0007669"/>
    <property type="project" value="UniProtKB-UniRule"/>
</dbReference>
<dbReference type="GO" id="GO:0016491">
    <property type="term" value="F:oxidoreductase activity"/>
    <property type="evidence" value="ECO:0007669"/>
    <property type="project" value="InterPro"/>
</dbReference>
<dbReference type="GO" id="GO:0008299">
    <property type="term" value="P:isoprenoid biosynthetic process"/>
    <property type="evidence" value="ECO:0007669"/>
    <property type="project" value="UniProtKB-UniRule"/>
</dbReference>
<dbReference type="CDD" id="cd02811">
    <property type="entry name" value="IDI-2_FMN"/>
    <property type="match status" value="1"/>
</dbReference>
<dbReference type="Gene3D" id="3.20.20.70">
    <property type="entry name" value="Aldolase class I"/>
    <property type="match status" value="1"/>
</dbReference>
<dbReference type="HAMAP" id="MF_00354">
    <property type="entry name" value="Idi_2"/>
    <property type="match status" value="1"/>
</dbReference>
<dbReference type="InterPro" id="IPR013785">
    <property type="entry name" value="Aldolase_TIM"/>
</dbReference>
<dbReference type="InterPro" id="IPR000262">
    <property type="entry name" value="FMN-dep_DH"/>
</dbReference>
<dbReference type="InterPro" id="IPR011179">
    <property type="entry name" value="IPdP_isomerase"/>
</dbReference>
<dbReference type="NCBIfam" id="TIGR02151">
    <property type="entry name" value="IPP_isom_2"/>
    <property type="match status" value="1"/>
</dbReference>
<dbReference type="PANTHER" id="PTHR43665">
    <property type="entry name" value="ISOPENTENYL-DIPHOSPHATE DELTA-ISOMERASE"/>
    <property type="match status" value="1"/>
</dbReference>
<dbReference type="PANTHER" id="PTHR43665:SF1">
    <property type="entry name" value="ISOPENTENYL-DIPHOSPHATE DELTA-ISOMERASE"/>
    <property type="match status" value="1"/>
</dbReference>
<dbReference type="Pfam" id="PF01070">
    <property type="entry name" value="FMN_dh"/>
    <property type="match status" value="1"/>
</dbReference>
<dbReference type="PIRSF" id="PIRSF003314">
    <property type="entry name" value="IPP_isomerase"/>
    <property type="match status" value="1"/>
</dbReference>
<dbReference type="SUPFAM" id="SSF51395">
    <property type="entry name" value="FMN-linked oxidoreductases"/>
    <property type="match status" value="1"/>
</dbReference>
<organism>
    <name type="scientific">Bacillus cytotoxicus (strain DSM 22905 / CIP 110041 / 391-98 / NVH 391-98)</name>
    <dbReference type="NCBI Taxonomy" id="315749"/>
    <lineage>
        <taxon>Bacteria</taxon>
        <taxon>Bacillati</taxon>
        <taxon>Bacillota</taxon>
        <taxon>Bacilli</taxon>
        <taxon>Bacillales</taxon>
        <taxon>Bacillaceae</taxon>
        <taxon>Bacillus</taxon>
        <taxon>Bacillus cereus group</taxon>
    </lineage>
</organism>
<proteinExistence type="inferred from homology"/>
<protein>
    <recommendedName>
        <fullName evidence="1">Isopentenyl-diphosphate delta-isomerase</fullName>
        <shortName evidence="1">IPP isomerase</shortName>
        <ecNumber evidence="1">5.3.3.2</ecNumber>
    </recommendedName>
    <alternativeName>
        <fullName evidence="1">Isopentenyl diphosphate:dimethylallyl diphosphate isomerase</fullName>
    </alternativeName>
    <alternativeName>
        <fullName evidence="1">Isopentenyl pyrophosphate isomerase</fullName>
    </alternativeName>
    <alternativeName>
        <fullName evidence="1">Type 2 isopentenyl diphosphate isomerase</fullName>
        <shortName evidence="1">IDI-2</shortName>
    </alternativeName>
</protein>
<gene>
    <name evidence="1" type="primary">fni</name>
    <name type="ordered locus">Bcer98_1222</name>
</gene>
<evidence type="ECO:0000255" key="1">
    <source>
        <dbReference type="HAMAP-Rule" id="MF_00354"/>
    </source>
</evidence>
<reference key="1">
    <citation type="journal article" date="2008" name="Chem. Biol. Interact.">
        <title>Extending the Bacillus cereus group genomics to putative food-borne pathogens of different toxicity.</title>
        <authorList>
            <person name="Lapidus A."/>
            <person name="Goltsman E."/>
            <person name="Auger S."/>
            <person name="Galleron N."/>
            <person name="Segurens B."/>
            <person name="Dossat C."/>
            <person name="Land M.L."/>
            <person name="Broussolle V."/>
            <person name="Brillard J."/>
            <person name="Guinebretiere M.-H."/>
            <person name="Sanchis V."/>
            <person name="Nguen-the C."/>
            <person name="Lereclus D."/>
            <person name="Richardson P."/>
            <person name="Wincker P."/>
            <person name="Weissenbach J."/>
            <person name="Ehrlich S.D."/>
            <person name="Sorokin A."/>
        </authorList>
    </citation>
    <scope>NUCLEOTIDE SEQUENCE [LARGE SCALE GENOMIC DNA]</scope>
    <source>
        <strain>DSM 22905 / CIP 110041 / 391-98 / NVH 391-98</strain>
    </source>
</reference>
<comment type="function">
    <text evidence="1">Involved in the biosynthesis of isoprenoids. Catalyzes the 1,3-allylic rearrangement of the homoallylic substrate isopentenyl (IPP) to its allylic isomer, dimethylallyl diphosphate (DMAPP).</text>
</comment>
<comment type="catalytic activity">
    <reaction evidence="1">
        <text>isopentenyl diphosphate = dimethylallyl diphosphate</text>
        <dbReference type="Rhea" id="RHEA:23284"/>
        <dbReference type="ChEBI" id="CHEBI:57623"/>
        <dbReference type="ChEBI" id="CHEBI:128769"/>
        <dbReference type="EC" id="5.3.3.2"/>
    </reaction>
</comment>
<comment type="cofactor">
    <cofactor evidence="1">
        <name>FMN</name>
        <dbReference type="ChEBI" id="CHEBI:58210"/>
    </cofactor>
</comment>
<comment type="cofactor">
    <cofactor evidence="1">
        <name>NADPH</name>
        <dbReference type="ChEBI" id="CHEBI:57783"/>
    </cofactor>
</comment>
<comment type="cofactor">
    <cofactor evidence="1">
        <name>Mg(2+)</name>
        <dbReference type="ChEBI" id="CHEBI:18420"/>
    </cofactor>
</comment>
<comment type="subunit">
    <text evidence="1">Homooctamer. Dimer of tetramers.</text>
</comment>
<comment type="subcellular location">
    <subcellularLocation>
        <location evidence="1">Cytoplasm</location>
    </subcellularLocation>
</comment>
<comment type="similarity">
    <text evidence="1">Belongs to the IPP isomerase type 2 family.</text>
</comment>
<keyword id="KW-0963">Cytoplasm</keyword>
<keyword id="KW-0285">Flavoprotein</keyword>
<keyword id="KW-0288">FMN</keyword>
<keyword id="KW-0413">Isomerase</keyword>
<keyword id="KW-0414">Isoprene biosynthesis</keyword>
<keyword id="KW-0460">Magnesium</keyword>
<keyword id="KW-0479">Metal-binding</keyword>
<keyword id="KW-0521">NADP</keyword>
<sequence length="349" mass="38359">MAREKRKLEHIEYALSTGQSRTHGFCDIEFVHKSLPNSSFESVTCETKIGELSLSSPIFINAMTGGGGERTLHINEQLAYVAKHHHLAMAVGSQMAALKEKREVDSYRIVRRVNPNGIVFANLGSEATVEQAKCAVDMIEANALQIHLNVIQELTMPEGDRDFKGVLKRIENIVLTSEVPVIVKEVGFGMSKETVQQLANIGVTAIDIGGQGGTNFAAVENERRNRMLSYFNDWGIQTASSIIEASSTNNTLSLIASGGIQTALDVAKAIALGAQATAFAGYFLRILMNEGMDTLIEEVELLHTDLRFIMTALGAKNILELQQVPLVVKGDTYHWLTQRGIDTMYYSQR</sequence>